<name>AP3M_SCHPO</name>
<reference key="1">
    <citation type="journal article" date="2002" name="Nature">
        <title>The genome sequence of Schizosaccharomyces pombe.</title>
        <authorList>
            <person name="Wood V."/>
            <person name="Gwilliam R."/>
            <person name="Rajandream M.A."/>
            <person name="Lyne M.H."/>
            <person name="Lyne R."/>
            <person name="Stewart A."/>
            <person name="Sgouros J.G."/>
            <person name="Peat N."/>
            <person name="Hayles J."/>
            <person name="Baker S.G."/>
            <person name="Basham D."/>
            <person name="Bowman S."/>
            <person name="Brooks K."/>
            <person name="Brown D."/>
            <person name="Brown S."/>
            <person name="Chillingworth T."/>
            <person name="Churcher C.M."/>
            <person name="Collins M."/>
            <person name="Connor R."/>
            <person name="Cronin A."/>
            <person name="Davis P."/>
            <person name="Feltwell T."/>
            <person name="Fraser A."/>
            <person name="Gentles S."/>
            <person name="Goble A."/>
            <person name="Hamlin N."/>
            <person name="Harris D.E."/>
            <person name="Hidalgo J."/>
            <person name="Hodgson G."/>
            <person name="Holroyd S."/>
            <person name="Hornsby T."/>
            <person name="Howarth S."/>
            <person name="Huckle E.J."/>
            <person name="Hunt S."/>
            <person name="Jagels K."/>
            <person name="James K.D."/>
            <person name="Jones L."/>
            <person name="Jones M."/>
            <person name="Leather S."/>
            <person name="McDonald S."/>
            <person name="McLean J."/>
            <person name="Mooney P."/>
            <person name="Moule S."/>
            <person name="Mungall K.L."/>
            <person name="Murphy L.D."/>
            <person name="Niblett D."/>
            <person name="Odell C."/>
            <person name="Oliver K."/>
            <person name="O'Neil S."/>
            <person name="Pearson D."/>
            <person name="Quail M.A."/>
            <person name="Rabbinowitsch E."/>
            <person name="Rutherford K.M."/>
            <person name="Rutter S."/>
            <person name="Saunders D."/>
            <person name="Seeger K."/>
            <person name="Sharp S."/>
            <person name="Skelton J."/>
            <person name="Simmonds M.N."/>
            <person name="Squares R."/>
            <person name="Squares S."/>
            <person name="Stevens K."/>
            <person name="Taylor K."/>
            <person name="Taylor R.G."/>
            <person name="Tivey A."/>
            <person name="Walsh S.V."/>
            <person name="Warren T."/>
            <person name="Whitehead S."/>
            <person name="Woodward J.R."/>
            <person name="Volckaert G."/>
            <person name="Aert R."/>
            <person name="Robben J."/>
            <person name="Grymonprez B."/>
            <person name="Weltjens I."/>
            <person name="Vanstreels E."/>
            <person name="Rieger M."/>
            <person name="Schaefer M."/>
            <person name="Mueller-Auer S."/>
            <person name="Gabel C."/>
            <person name="Fuchs M."/>
            <person name="Duesterhoeft A."/>
            <person name="Fritzc C."/>
            <person name="Holzer E."/>
            <person name="Moestl D."/>
            <person name="Hilbert H."/>
            <person name="Borzym K."/>
            <person name="Langer I."/>
            <person name="Beck A."/>
            <person name="Lehrach H."/>
            <person name="Reinhardt R."/>
            <person name="Pohl T.M."/>
            <person name="Eger P."/>
            <person name="Zimmermann W."/>
            <person name="Wedler H."/>
            <person name="Wambutt R."/>
            <person name="Purnelle B."/>
            <person name="Goffeau A."/>
            <person name="Cadieu E."/>
            <person name="Dreano S."/>
            <person name="Gloux S."/>
            <person name="Lelaure V."/>
            <person name="Mottier S."/>
            <person name="Galibert F."/>
            <person name="Aves S.J."/>
            <person name="Xiang Z."/>
            <person name="Hunt C."/>
            <person name="Moore K."/>
            <person name="Hurst S.M."/>
            <person name="Lucas M."/>
            <person name="Rochet M."/>
            <person name="Gaillardin C."/>
            <person name="Tallada V.A."/>
            <person name="Garzon A."/>
            <person name="Thode G."/>
            <person name="Daga R.R."/>
            <person name="Cruzado L."/>
            <person name="Jimenez J."/>
            <person name="Sanchez M."/>
            <person name="del Rey F."/>
            <person name="Benito J."/>
            <person name="Dominguez A."/>
            <person name="Revuelta J.L."/>
            <person name="Moreno S."/>
            <person name="Armstrong J."/>
            <person name="Forsburg S.L."/>
            <person name="Cerutti L."/>
            <person name="Lowe T."/>
            <person name="McCombie W.R."/>
            <person name="Paulsen I."/>
            <person name="Potashkin J."/>
            <person name="Shpakovski G.V."/>
            <person name="Ussery D."/>
            <person name="Barrell B.G."/>
            <person name="Nurse P."/>
        </authorList>
    </citation>
    <scope>NUCLEOTIDE SEQUENCE [LARGE SCALE GENOMIC DNA]</scope>
    <source>
        <strain>972 / ATCC 24843</strain>
    </source>
</reference>
<reference key="2">
    <citation type="journal article" date="2006" name="Nat. Biotechnol.">
        <title>ORFeome cloning and global analysis of protein localization in the fission yeast Schizosaccharomyces pombe.</title>
        <authorList>
            <person name="Matsuyama A."/>
            <person name="Arai R."/>
            <person name="Yashiroda Y."/>
            <person name="Shirai A."/>
            <person name="Kamata A."/>
            <person name="Sekido S."/>
            <person name="Kobayashi Y."/>
            <person name="Hashimoto A."/>
            <person name="Hamamoto M."/>
            <person name="Hiraoka Y."/>
            <person name="Horinouchi S."/>
            <person name="Yoshida M."/>
        </authorList>
    </citation>
    <scope>SUBCELLULAR LOCATION [LARGE SCALE ANALYSIS]</scope>
</reference>
<organism>
    <name type="scientific">Schizosaccharomyces pombe (strain 972 / ATCC 24843)</name>
    <name type="common">Fission yeast</name>
    <dbReference type="NCBI Taxonomy" id="284812"/>
    <lineage>
        <taxon>Eukaryota</taxon>
        <taxon>Fungi</taxon>
        <taxon>Dikarya</taxon>
        <taxon>Ascomycota</taxon>
        <taxon>Taphrinomycotina</taxon>
        <taxon>Schizosaccharomycetes</taxon>
        <taxon>Schizosaccharomycetales</taxon>
        <taxon>Schizosaccharomycetaceae</taxon>
        <taxon>Schizosaccharomyces</taxon>
    </lineage>
</organism>
<keyword id="KW-0963">Cytoplasm</keyword>
<keyword id="KW-0968">Cytoplasmic vesicle</keyword>
<keyword id="KW-0206">Cytoskeleton</keyword>
<keyword id="KW-0333">Golgi apparatus</keyword>
<keyword id="KW-0472">Membrane</keyword>
<keyword id="KW-0653">Protein transport</keyword>
<keyword id="KW-1185">Reference proteome</keyword>
<keyword id="KW-0813">Transport</keyword>
<protein>
    <recommendedName>
        <fullName>AP-3 complex subunit mu</fullName>
    </recommendedName>
    <alternativeName>
        <fullName>Adaptor-related protein complex 3 subunit mu</fullName>
    </alternativeName>
</protein>
<feature type="chain" id="PRO_0000316199" description="AP-3 complex subunit mu">
    <location>
        <begin position="1"/>
        <end position="425"/>
    </location>
</feature>
<feature type="domain" description="MHD" evidence="3">
    <location>
        <begin position="175"/>
        <end position="423"/>
    </location>
</feature>
<sequence>MSTIEAIYLVDTNGALLLQLESRGRTSPITLEHIKNELFRYKLRNEEPPFILHNKNFLIFQELEEDVRLCIPTTCDTEPLYIHDIMRRIVDVVKTFFGGFNASKVEKNVCVIVQLLAEMIDYGYATCMEPNALQDIVPLPSFMNKFMAVTGLQTNTPTLARDTVPWRTAKAKYATNEFFIHVLERVSAVYQPNGKLAFGTVKSDMECKCQISGMPLLLLSLRPGTKLGNVRFHQSVNLKRWKQHPDQIEFIPPDGKFTLASFQTDFATQKSLPVVVEAKNKLDGRFEVRIRNTGKKSVENLKILITIPQALKSVTVTEGNYIFRASKYTHMEEGILEWSVKKLAWTSPALVLTGFLAPLKKDANSTEESSSYSKLEHLDLQYKLQGSTLHNFKVESLKMLNHPDKKSYKGVKHTIIAQNVSFRFR</sequence>
<comment type="function">
    <text evidence="1">Part of the AP-3 complex, an adaptor-related complex which is not clathrin-associated. The complex is associated with the Golgi region as well as more peripheral structures. It facilitates the budding of vesicles from the Golgi membrane and may be directly involved in trafficking to the vacuole (By similarity).</text>
</comment>
<comment type="subcellular location">
    <subcellularLocation>
        <location evidence="4">Cytoplasm</location>
        <location evidence="4">Cytoskeleton</location>
        <location evidence="4">Microtubule organizing center</location>
        <location evidence="4">Spindle pole body</location>
    </subcellularLocation>
    <subcellularLocation>
        <location evidence="4">Membrane</location>
        <topology evidence="4">Peripheral membrane protein</topology>
    </subcellularLocation>
    <subcellularLocation>
        <location evidence="2">Golgi apparatus</location>
    </subcellularLocation>
    <subcellularLocation>
        <location evidence="2">Cytoplasmic vesicle membrane</location>
        <topology evidence="2">Peripheral membrane protein</topology>
        <orientation evidence="2">Cytoplasmic side</orientation>
    </subcellularLocation>
    <text evidence="2 4">Localizes at the cell tip and the barrier septum (PubMed:16823372). Component of the coat surrounding the cytoplasmic face of coated vesicles located at the Golgi complex (By similarity).</text>
</comment>
<comment type="similarity">
    <text evidence="5">Belongs to the adaptor complexes medium subunit family.</text>
</comment>
<gene>
    <name type="primary">apm3</name>
    <name type="ORF">SPBC651.11c</name>
</gene>
<evidence type="ECO:0000250" key="1"/>
<evidence type="ECO:0000250" key="2">
    <source>
        <dbReference type="UniProtKB" id="P38153"/>
    </source>
</evidence>
<evidence type="ECO:0000255" key="3">
    <source>
        <dbReference type="PROSITE-ProRule" id="PRU00404"/>
    </source>
</evidence>
<evidence type="ECO:0000269" key="4">
    <source>
    </source>
</evidence>
<evidence type="ECO:0000305" key="5"/>
<proteinExistence type="inferred from homology"/>
<dbReference type="EMBL" id="CU329671">
    <property type="protein sequence ID" value="CAB37607.1"/>
    <property type="molecule type" value="Genomic_DNA"/>
</dbReference>
<dbReference type="PIR" id="T40610">
    <property type="entry name" value="T40610"/>
</dbReference>
<dbReference type="RefSeq" id="NP_595509.1">
    <property type="nucleotide sequence ID" value="NM_001021419.2"/>
</dbReference>
<dbReference type="SMR" id="O94669"/>
<dbReference type="BioGRID" id="277634">
    <property type="interactions" value="46"/>
</dbReference>
<dbReference type="FunCoup" id="O94669">
    <property type="interactions" value="15"/>
</dbReference>
<dbReference type="STRING" id="284812.O94669"/>
<dbReference type="PaxDb" id="4896-SPBC651.11c.1"/>
<dbReference type="EnsemblFungi" id="SPBC651.11c.1">
    <property type="protein sequence ID" value="SPBC651.11c.1:pep"/>
    <property type="gene ID" value="SPBC651.11c"/>
</dbReference>
<dbReference type="GeneID" id="2541119"/>
<dbReference type="KEGG" id="spo:2541119"/>
<dbReference type="PomBase" id="SPBC651.11c">
    <property type="gene designation" value="apm3"/>
</dbReference>
<dbReference type="VEuPathDB" id="FungiDB:SPBC651.11c"/>
<dbReference type="eggNOG" id="KOG2740">
    <property type="taxonomic scope" value="Eukaryota"/>
</dbReference>
<dbReference type="HOGENOM" id="CLU_026996_6_2_1"/>
<dbReference type="InParanoid" id="O94669"/>
<dbReference type="OMA" id="INVHFTI"/>
<dbReference type="PhylomeDB" id="O94669"/>
<dbReference type="PRO" id="PR:O94669"/>
<dbReference type="Proteomes" id="UP000002485">
    <property type="component" value="Chromosome II"/>
</dbReference>
<dbReference type="GO" id="GO:0030123">
    <property type="term" value="C:AP-3 adaptor complex"/>
    <property type="evidence" value="ECO:0000266"/>
    <property type="project" value="PomBase"/>
</dbReference>
<dbReference type="GO" id="GO:0032153">
    <property type="term" value="C:cell division site"/>
    <property type="evidence" value="ECO:0007005"/>
    <property type="project" value="PomBase"/>
</dbReference>
<dbReference type="GO" id="GO:0051286">
    <property type="term" value="C:cell tip"/>
    <property type="evidence" value="ECO:0007005"/>
    <property type="project" value="PomBase"/>
</dbReference>
<dbReference type="GO" id="GO:0030131">
    <property type="term" value="C:clathrin adaptor complex"/>
    <property type="evidence" value="ECO:0007669"/>
    <property type="project" value="InterPro"/>
</dbReference>
<dbReference type="GO" id="GO:0031410">
    <property type="term" value="C:cytoplasmic vesicle"/>
    <property type="evidence" value="ECO:0000318"/>
    <property type="project" value="GO_Central"/>
</dbReference>
<dbReference type="GO" id="GO:0030659">
    <property type="term" value="C:cytoplasmic vesicle membrane"/>
    <property type="evidence" value="ECO:0007669"/>
    <property type="project" value="UniProtKB-SubCell"/>
</dbReference>
<dbReference type="GO" id="GO:0005794">
    <property type="term" value="C:Golgi apparatus"/>
    <property type="evidence" value="ECO:0007669"/>
    <property type="project" value="UniProtKB-SubCell"/>
</dbReference>
<dbReference type="GO" id="GO:0072686">
    <property type="term" value="C:mitotic spindle"/>
    <property type="evidence" value="ECO:0007005"/>
    <property type="project" value="PomBase"/>
</dbReference>
<dbReference type="GO" id="GO:0044732">
    <property type="term" value="C:mitotic spindle pole body"/>
    <property type="evidence" value="ECO:0007005"/>
    <property type="project" value="PomBase"/>
</dbReference>
<dbReference type="GO" id="GO:0030276">
    <property type="term" value="F:clathrin binding"/>
    <property type="evidence" value="ECO:0000255"/>
    <property type="project" value="PomBase"/>
</dbReference>
<dbReference type="GO" id="GO:0006897">
    <property type="term" value="P:endocytosis"/>
    <property type="evidence" value="ECO:0000318"/>
    <property type="project" value="GO_Central"/>
</dbReference>
<dbReference type="GO" id="GO:0006896">
    <property type="term" value="P:Golgi to vacuole transport"/>
    <property type="evidence" value="ECO:0000266"/>
    <property type="project" value="PomBase"/>
</dbReference>
<dbReference type="GO" id="GO:0006886">
    <property type="term" value="P:intracellular protein transport"/>
    <property type="evidence" value="ECO:0007669"/>
    <property type="project" value="InterPro"/>
</dbReference>
<dbReference type="CDD" id="cd09252">
    <property type="entry name" value="AP-3_Mu3_Cterm"/>
    <property type="match status" value="1"/>
</dbReference>
<dbReference type="CDD" id="cd14837">
    <property type="entry name" value="AP3_Mu_N"/>
    <property type="match status" value="1"/>
</dbReference>
<dbReference type="Gene3D" id="3.30.450.60">
    <property type="match status" value="1"/>
</dbReference>
<dbReference type="Gene3D" id="2.60.40.1170">
    <property type="entry name" value="Mu homology domain, subdomain B"/>
    <property type="match status" value="2"/>
</dbReference>
<dbReference type="InterPro" id="IPR050431">
    <property type="entry name" value="Adaptor_comp_med_subunit"/>
</dbReference>
<dbReference type="InterPro" id="IPR036168">
    <property type="entry name" value="AP2_Mu_C_sf"/>
</dbReference>
<dbReference type="InterPro" id="IPR001392">
    <property type="entry name" value="Clathrin_mu"/>
</dbReference>
<dbReference type="InterPro" id="IPR011012">
    <property type="entry name" value="Longin-like_dom_sf"/>
</dbReference>
<dbReference type="InterPro" id="IPR028565">
    <property type="entry name" value="MHD"/>
</dbReference>
<dbReference type="PANTHER" id="PTHR10529">
    <property type="entry name" value="AP COMPLEX SUBUNIT MU"/>
    <property type="match status" value="1"/>
</dbReference>
<dbReference type="Pfam" id="PF00928">
    <property type="entry name" value="Adap_comp_sub"/>
    <property type="match status" value="1"/>
</dbReference>
<dbReference type="PIRSF" id="PIRSF005992">
    <property type="entry name" value="Clathrin_mu"/>
    <property type="match status" value="1"/>
</dbReference>
<dbReference type="PRINTS" id="PR00314">
    <property type="entry name" value="CLATHRINADPT"/>
</dbReference>
<dbReference type="SUPFAM" id="SSF49447">
    <property type="entry name" value="Second domain of Mu2 adaptin subunit (ap50) of ap2 adaptor"/>
    <property type="match status" value="1"/>
</dbReference>
<dbReference type="SUPFAM" id="SSF64356">
    <property type="entry name" value="SNARE-like"/>
    <property type="match status" value="1"/>
</dbReference>
<dbReference type="PROSITE" id="PS51072">
    <property type="entry name" value="MHD"/>
    <property type="match status" value="1"/>
</dbReference>
<accession>O94669</accession>